<comment type="function">
    <text evidence="1">May play a role in regulating breast cancer cell invasiveness. May be involved in RYBP-mediated breast cancer progression.</text>
</comment>
<comment type="alternative products">
    <event type="alternative splicing"/>
    <isoform>
        <id>Q80WV7-1</id>
        <name>1</name>
        <sequence type="displayed"/>
    </isoform>
    <isoform>
        <id>Q80WV7-2</id>
        <name>2</name>
        <sequence type="described" ref="VSP_034270 VSP_034271"/>
    </isoform>
</comment>
<comment type="similarity">
    <text evidence="5">Belongs to the CWC21 family.</text>
</comment>
<comment type="sequence caution" evidence="5">
    <conflict type="erroneous initiation">
        <sequence resource="EMBL-CDS" id="BAB29002"/>
    </conflict>
</comment>
<accession>Q80WV7</accession>
<accession>Q9CUV5</accession>
<accession>Q9JJ91</accession>
<organism>
    <name type="scientific">Mus musculus</name>
    <name type="common">Mouse</name>
    <dbReference type="NCBI Taxonomy" id="10090"/>
    <lineage>
        <taxon>Eukaryota</taxon>
        <taxon>Metazoa</taxon>
        <taxon>Chordata</taxon>
        <taxon>Craniata</taxon>
        <taxon>Vertebrata</taxon>
        <taxon>Euteleostomi</taxon>
        <taxon>Mammalia</taxon>
        <taxon>Eutheria</taxon>
        <taxon>Euarchontoglires</taxon>
        <taxon>Glires</taxon>
        <taxon>Rodentia</taxon>
        <taxon>Myomorpha</taxon>
        <taxon>Muroidea</taxon>
        <taxon>Muridae</taxon>
        <taxon>Murinae</taxon>
        <taxon>Mus</taxon>
        <taxon>Mus</taxon>
    </lineage>
</organism>
<proteinExistence type="evidence at transcript level"/>
<dbReference type="EMBL" id="AB041661">
    <property type="protein sequence ID" value="BAA95106.1"/>
    <property type="molecule type" value="mRNA"/>
</dbReference>
<dbReference type="EMBL" id="BC051947">
    <property type="protein sequence ID" value="AAH51947.1"/>
    <property type="molecule type" value="mRNA"/>
</dbReference>
<dbReference type="EMBL" id="AK013812">
    <property type="protein sequence ID" value="BAB29002.1"/>
    <property type="status" value="ALT_INIT"/>
    <property type="molecule type" value="mRNA"/>
</dbReference>
<dbReference type="CCDS" id="CCDS39319.2">
    <molecule id="Q80WV7-1"/>
</dbReference>
<dbReference type="RefSeq" id="NP_001390150.1">
    <molecule id="Q80WV7-1"/>
    <property type="nucleotide sequence ID" value="NM_001403221.1"/>
</dbReference>
<dbReference type="RefSeq" id="NP_067378.2">
    <molecule id="Q80WV7-1"/>
    <property type="nucleotide sequence ID" value="NM_021403.3"/>
</dbReference>
<dbReference type="RefSeq" id="XP_006504534.1">
    <property type="nucleotide sequence ID" value="XM_006504471.1"/>
</dbReference>
<dbReference type="RefSeq" id="XP_006504535.1">
    <molecule id="Q80WV7-1"/>
    <property type="nucleotide sequence ID" value="XM_006504472.3"/>
</dbReference>
<dbReference type="RefSeq" id="XP_036021281.1">
    <molecule id="Q80WV7-1"/>
    <property type="nucleotide sequence ID" value="XM_036165388.1"/>
</dbReference>
<dbReference type="RefSeq" id="XP_036021282.1">
    <molecule id="Q80WV7-1"/>
    <property type="nucleotide sequence ID" value="XM_036165389.1"/>
</dbReference>
<dbReference type="SMR" id="Q80WV7"/>
<dbReference type="BioGRID" id="208393">
    <property type="interactions" value="16"/>
</dbReference>
<dbReference type="FunCoup" id="Q80WV7">
    <property type="interactions" value="14"/>
</dbReference>
<dbReference type="STRING" id="10090.ENSMUSP00000115695"/>
<dbReference type="GlyGen" id="Q80WV7">
    <property type="glycosylation" value="1 site"/>
</dbReference>
<dbReference type="iPTMnet" id="Q80WV7"/>
<dbReference type="PhosphoSitePlus" id="Q80WV7"/>
<dbReference type="PaxDb" id="10090-ENSMUSP00000115695"/>
<dbReference type="ProteomicsDB" id="257403">
    <molecule id="Q80WV7-1"/>
</dbReference>
<dbReference type="ProteomicsDB" id="257404">
    <molecule id="Q80WV7-2"/>
</dbReference>
<dbReference type="Antibodypedia" id="8308">
    <property type="antibodies" value="61 antibodies from 9 providers"/>
</dbReference>
<dbReference type="Ensembl" id="ENSMUST00000144211.2">
    <molecule id="Q80WV7-1"/>
    <property type="protein sequence ID" value="ENSMUSP00000115695.2"/>
    <property type="gene ID" value="ENSMUSG00000039860.20"/>
</dbReference>
<dbReference type="GeneID" id="58212"/>
<dbReference type="KEGG" id="mmu:58212"/>
<dbReference type="UCSC" id="uc008zza.1">
    <molecule id="Q80WV7-2"/>
    <property type="organism name" value="mouse"/>
</dbReference>
<dbReference type="UCSC" id="uc008zzc.1">
    <molecule id="Q80WV7-1"/>
    <property type="organism name" value="mouse"/>
</dbReference>
<dbReference type="AGR" id="MGI:1920309"/>
<dbReference type="CTD" id="222183"/>
<dbReference type="MGI" id="MGI:1920309">
    <property type="gene designation" value="Srrm3"/>
</dbReference>
<dbReference type="VEuPathDB" id="HostDB:ENSMUSG00000039860"/>
<dbReference type="eggNOG" id="KOG1869">
    <property type="taxonomic scope" value="Eukaryota"/>
</dbReference>
<dbReference type="GeneTree" id="ENSGT00940000162625"/>
<dbReference type="HOGENOM" id="CLU_027803_0_0_1"/>
<dbReference type="InParanoid" id="Q80WV7"/>
<dbReference type="OMA" id="KCTEFEM"/>
<dbReference type="OrthoDB" id="92238at9989"/>
<dbReference type="PhylomeDB" id="Q80WV7"/>
<dbReference type="TreeFam" id="TF335721"/>
<dbReference type="BioGRID-ORCS" id="58212">
    <property type="hits" value="5 hits in 77 CRISPR screens"/>
</dbReference>
<dbReference type="ChiTaRS" id="Srrm3">
    <property type="organism name" value="mouse"/>
</dbReference>
<dbReference type="PRO" id="PR:Q80WV7"/>
<dbReference type="Proteomes" id="UP000000589">
    <property type="component" value="Chromosome 5"/>
</dbReference>
<dbReference type="RNAct" id="Q80WV7">
    <property type="molecule type" value="protein"/>
</dbReference>
<dbReference type="Bgee" id="ENSMUSG00000039860">
    <property type="expression patterns" value="Expressed in retinal neural layer and 106 other cell types or tissues"/>
</dbReference>
<dbReference type="ExpressionAtlas" id="Q80WV7">
    <property type="expression patterns" value="baseline and differential"/>
</dbReference>
<dbReference type="GO" id="GO:0005634">
    <property type="term" value="C:nucleus"/>
    <property type="evidence" value="ECO:0007669"/>
    <property type="project" value="UniProtKB-ARBA"/>
</dbReference>
<dbReference type="CDD" id="cd21376">
    <property type="entry name" value="cwf21_SRRM3"/>
    <property type="match status" value="1"/>
</dbReference>
<dbReference type="Gene3D" id="6.10.140.420">
    <property type="match status" value="1"/>
</dbReference>
<dbReference type="InterPro" id="IPR013170">
    <property type="entry name" value="mRNA_splic_Cwf21_dom"/>
</dbReference>
<dbReference type="InterPro" id="IPR047489">
    <property type="entry name" value="SRRM3_cwf21"/>
</dbReference>
<dbReference type="InterPro" id="IPR029360">
    <property type="entry name" value="SRRM_C"/>
</dbReference>
<dbReference type="InterPro" id="IPR052109">
    <property type="entry name" value="SRRM_Domain-Containing"/>
</dbReference>
<dbReference type="PANTHER" id="PTHR34755">
    <property type="entry name" value="SERINE/ARGININE REPETITIVE MATRIX PROTEIN 3-RELATED"/>
    <property type="match status" value="1"/>
</dbReference>
<dbReference type="PANTHER" id="PTHR34755:SF2">
    <property type="entry name" value="SERINE_ARGININE REPETITIVE MATRIX PROTEIN 3"/>
    <property type="match status" value="1"/>
</dbReference>
<dbReference type="Pfam" id="PF08312">
    <property type="entry name" value="cwf21"/>
    <property type="match status" value="1"/>
</dbReference>
<dbReference type="Pfam" id="PF15230">
    <property type="entry name" value="SRRM_C"/>
    <property type="match status" value="1"/>
</dbReference>
<dbReference type="SMART" id="SM01115">
    <property type="entry name" value="cwf21"/>
    <property type="match status" value="1"/>
</dbReference>
<sequence length="648" mass="71104">MSSTVNNGATGMPAPPDAANGFPQPGASSGSWPRAEEELRAAEPGLVKRAHREILDHERKRRVELKCMELQEMMEEQGYSEEEIRQKVGTFRQMLMEKEGVLTREDRPGAHIVAETPRRMEGLEPGLEYPPFDEDDGPVDCDCPVSCYRGHRGYRTKHWSSSSASPPPKKKKKKKGSHRRSRKKRRLESECSCGSASPLRKKKKNVKKHRRDRSDSGSRRKRRYRSRSLKSKRKEKNKERKRPHTESPGRRFHHHSSASSHSPSMSSHYSDSGSPSRLSPKHRDDGRKTGSQRSSGSRSPSPSGGSGWGSPQQNGGSRQRSGAHGGRPGSAHSPPDKPSSPRACDKAAAAPTPPARGKDSQSPRSAPSSQGRGGRAAGGTARRRRRRRRRRRSRSSANAPRRRGRRRTKPAPPRGSSRSLSGAHSSSDSGGGAPGPGPEPCSERGHGGHGKRAKERPPRARPASTSPSPGTRGRRGGPEGNSSSRSPGPHQGSWSSSRSPSKSHSRSPDKRTRSPSLSPSPKKPLGRDKDSEGRARHAEAEAARTRRRSRSYSPIRKRRRDSPSFMEPRRITSARKRPIPYYRPSPSSSSSCLSTDYSSRSHSRSPSPGHSHGSYSSRSHGTRSRSCSASRSRSPSYHSRSSSESGGF</sequence>
<reference key="1">
    <citation type="submission" date="2000-04" db="EMBL/GenBank/DDBJ databases">
        <title>Isolation of full-length cDNA clones from mouse brain cDNA library made by oligo-capping method.</title>
        <authorList>
            <person name="Osada N."/>
            <person name="Kusuda J."/>
            <person name="Tanuma R."/>
            <person name="Ito A."/>
            <person name="Hirata M."/>
            <person name="Sugano S."/>
            <person name="Hashimoto K."/>
        </authorList>
    </citation>
    <scope>NUCLEOTIDE SEQUENCE [LARGE SCALE MRNA] (ISOFORM 2)</scope>
    <source>
        <strain>C57BL/6J</strain>
        <tissue>Brain</tissue>
    </source>
</reference>
<reference key="2">
    <citation type="journal article" date="2004" name="Genome Res.">
        <title>The status, quality, and expansion of the NIH full-length cDNA project: the Mammalian Gene Collection (MGC).</title>
        <authorList>
            <consortium name="The MGC Project Team"/>
        </authorList>
    </citation>
    <scope>NUCLEOTIDE SEQUENCE [LARGE SCALE MRNA] (ISOFORM 1)</scope>
    <source>
        <strain>C57BL/6J</strain>
        <tissue>Brain</tissue>
    </source>
</reference>
<reference key="3">
    <citation type="journal article" date="2005" name="Science">
        <title>The transcriptional landscape of the mammalian genome.</title>
        <authorList>
            <person name="Carninci P."/>
            <person name="Kasukawa T."/>
            <person name="Katayama S."/>
            <person name="Gough J."/>
            <person name="Frith M.C."/>
            <person name="Maeda N."/>
            <person name="Oyama R."/>
            <person name="Ravasi T."/>
            <person name="Lenhard B."/>
            <person name="Wells C."/>
            <person name="Kodzius R."/>
            <person name="Shimokawa K."/>
            <person name="Bajic V.B."/>
            <person name="Brenner S.E."/>
            <person name="Batalov S."/>
            <person name="Forrest A.R."/>
            <person name="Zavolan M."/>
            <person name="Davis M.J."/>
            <person name="Wilming L.G."/>
            <person name="Aidinis V."/>
            <person name="Allen J.E."/>
            <person name="Ambesi-Impiombato A."/>
            <person name="Apweiler R."/>
            <person name="Aturaliya R.N."/>
            <person name="Bailey T.L."/>
            <person name="Bansal M."/>
            <person name="Baxter L."/>
            <person name="Beisel K.W."/>
            <person name="Bersano T."/>
            <person name="Bono H."/>
            <person name="Chalk A.M."/>
            <person name="Chiu K.P."/>
            <person name="Choudhary V."/>
            <person name="Christoffels A."/>
            <person name="Clutterbuck D.R."/>
            <person name="Crowe M.L."/>
            <person name="Dalla E."/>
            <person name="Dalrymple B.P."/>
            <person name="de Bono B."/>
            <person name="Della Gatta G."/>
            <person name="di Bernardo D."/>
            <person name="Down T."/>
            <person name="Engstrom P."/>
            <person name="Fagiolini M."/>
            <person name="Faulkner G."/>
            <person name="Fletcher C.F."/>
            <person name="Fukushima T."/>
            <person name="Furuno M."/>
            <person name="Futaki S."/>
            <person name="Gariboldi M."/>
            <person name="Georgii-Hemming P."/>
            <person name="Gingeras T.R."/>
            <person name="Gojobori T."/>
            <person name="Green R.E."/>
            <person name="Gustincich S."/>
            <person name="Harbers M."/>
            <person name="Hayashi Y."/>
            <person name="Hensch T.K."/>
            <person name="Hirokawa N."/>
            <person name="Hill D."/>
            <person name="Huminiecki L."/>
            <person name="Iacono M."/>
            <person name="Ikeo K."/>
            <person name="Iwama A."/>
            <person name="Ishikawa T."/>
            <person name="Jakt M."/>
            <person name="Kanapin A."/>
            <person name="Katoh M."/>
            <person name="Kawasawa Y."/>
            <person name="Kelso J."/>
            <person name="Kitamura H."/>
            <person name="Kitano H."/>
            <person name="Kollias G."/>
            <person name="Krishnan S.P."/>
            <person name="Kruger A."/>
            <person name="Kummerfeld S.K."/>
            <person name="Kurochkin I.V."/>
            <person name="Lareau L.F."/>
            <person name="Lazarevic D."/>
            <person name="Lipovich L."/>
            <person name="Liu J."/>
            <person name="Liuni S."/>
            <person name="McWilliam S."/>
            <person name="Madan Babu M."/>
            <person name="Madera M."/>
            <person name="Marchionni L."/>
            <person name="Matsuda H."/>
            <person name="Matsuzawa S."/>
            <person name="Miki H."/>
            <person name="Mignone F."/>
            <person name="Miyake S."/>
            <person name="Morris K."/>
            <person name="Mottagui-Tabar S."/>
            <person name="Mulder N."/>
            <person name="Nakano N."/>
            <person name="Nakauchi H."/>
            <person name="Ng P."/>
            <person name="Nilsson R."/>
            <person name="Nishiguchi S."/>
            <person name="Nishikawa S."/>
            <person name="Nori F."/>
            <person name="Ohara O."/>
            <person name="Okazaki Y."/>
            <person name="Orlando V."/>
            <person name="Pang K.C."/>
            <person name="Pavan W.J."/>
            <person name="Pavesi G."/>
            <person name="Pesole G."/>
            <person name="Petrovsky N."/>
            <person name="Piazza S."/>
            <person name="Reed J."/>
            <person name="Reid J.F."/>
            <person name="Ring B.Z."/>
            <person name="Ringwald M."/>
            <person name="Rost B."/>
            <person name="Ruan Y."/>
            <person name="Salzberg S.L."/>
            <person name="Sandelin A."/>
            <person name="Schneider C."/>
            <person name="Schoenbach C."/>
            <person name="Sekiguchi K."/>
            <person name="Semple C.A."/>
            <person name="Seno S."/>
            <person name="Sessa L."/>
            <person name="Sheng Y."/>
            <person name="Shibata Y."/>
            <person name="Shimada H."/>
            <person name="Shimada K."/>
            <person name="Silva D."/>
            <person name="Sinclair B."/>
            <person name="Sperling S."/>
            <person name="Stupka E."/>
            <person name="Sugiura K."/>
            <person name="Sultana R."/>
            <person name="Takenaka Y."/>
            <person name="Taki K."/>
            <person name="Tammoja K."/>
            <person name="Tan S.L."/>
            <person name="Tang S."/>
            <person name="Taylor M.S."/>
            <person name="Tegner J."/>
            <person name="Teichmann S.A."/>
            <person name="Ueda H.R."/>
            <person name="van Nimwegen E."/>
            <person name="Verardo R."/>
            <person name="Wei C.L."/>
            <person name="Yagi K."/>
            <person name="Yamanishi H."/>
            <person name="Zabarovsky E."/>
            <person name="Zhu S."/>
            <person name="Zimmer A."/>
            <person name="Hide W."/>
            <person name="Bult C."/>
            <person name="Grimmond S.M."/>
            <person name="Teasdale R.D."/>
            <person name="Liu E.T."/>
            <person name="Brusic V."/>
            <person name="Quackenbush J."/>
            <person name="Wahlestedt C."/>
            <person name="Mattick J.S."/>
            <person name="Hume D.A."/>
            <person name="Kai C."/>
            <person name="Sasaki D."/>
            <person name="Tomaru Y."/>
            <person name="Fukuda S."/>
            <person name="Kanamori-Katayama M."/>
            <person name="Suzuki M."/>
            <person name="Aoki J."/>
            <person name="Arakawa T."/>
            <person name="Iida J."/>
            <person name="Imamura K."/>
            <person name="Itoh M."/>
            <person name="Kato T."/>
            <person name="Kawaji H."/>
            <person name="Kawagashira N."/>
            <person name="Kawashima T."/>
            <person name="Kojima M."/>
            <person name="Kondo S."/>
            <person name="Konno H."/>
            <person name="Nakano K."/>
            <person name="Ninomiya N."/>
            <person name="Nishio T."/>
            <person name="Okada M."/>
            <person name="Plessy C."/>
            <person name="Shibata K."/>
            <person name="Shiraki T."/>
            <person name="Suzuki S."/>
            <person name="Tagami M."/>
            <person name="Waki K."/>
            <person name="Watahiki A."/>
            <person name="Okamura-Oho Y."/>
            <person name="Suzuki H."/>
            <person name="Kawai J."/>
            <person name="Hayashizaki Y."/>
        </authorList>
    </citation>
    <scope>NUCLEOTIDE SEQUENCE [LARGE SCALE MRNA] OF 113-231</scope>
    <source>
        <strain>C57BL/6J</strain>
        <tissue>Hippocampus</tissue>
    </source>
</reference>
<feature type="chain" id="PRO_0000341376" description="Serine/arginine repetitive matrix protein 3">
    <location>
        <begin position="1"/>
        <end position="648"/>
    </location>
</feature>
<feature type="domain" description="CWF21" evidence="2">
    <location>
        <begin position="55"/>
        <end position="98"/>
    </location>
</feature>
<feature type="region of interest" description="Disordered" evidence="3">
    <location>
        <begin position="1"/>
        <end position="44"/>
    </location>
</feature>
<feature type="region of interest" description="Disordered" evidence="3">
    <location>
        <begin position="99"/>
        <end position="139"/>
    </location>
</feature>
<feature type="region of interest" description="Disordered" evidence="3">
    <location>
        <begin position="154"/>
        <end position="648"/>
    </location>
</feature>
<feature type="compositionally biased region" description="Basic and acidic residues" evidence="3">
    <location>
        <begin position="99"/>
        <end position="109"/>
    </location>
</feature>
<feature type="compositionally biased region" description="Basic residues" evidence="3">
    <location>
        <begin position="168"/>
        <end position="186"/>
    </location>
</feature>
<feature type="compositionally biased region" description="Basic residues" evidence="3">
    <location>
        <begin position="199"/>
        <end position="211"/>
    </location>
</feature>
<feature type="compositionally biased region" description="Basic residues" evidence="3">
    <location>
        <begin position="219"/>
        <end position="243"/>
    </location>
</feature>
<feature type="compositionally biased region" description="Low complexity" evidence="3">
    <location>
        <begin position="257"/>
        <end position="276"/>
    </location>
</feature>
<feature type="compositionally biased region" description="Low complexity" evidence="3">
    <location>
        <begin position="289"/>
        <end position="317"/>
    </location>
</feature>
<feature type="compositionally biased region" description="Basic residues" evidence="3">
    <location>
        <begin position="381"/>
        <end position="409"/>
    </location>
</feature>
<feature type="compositionally biased region" description="Low complexity" evidence="3">
    <location>
        <begin position="414"/>
        <end position="428"/>
    </location>
</feature>
<feature type="compositionally biased region" description="Low complexity" evidence="3">
    <location>
        <begin position="461"/>
        <end position="471"/>
    </location>
</feature>
<feature type="compositionally biased region" description="Low complexity" evidence="3">
    <location>
        <begin position="493"/>
        <end position="502"/>
    </location>
</feature>
<feature type="compositionally biased region" description="Basic and acidic residues" evidence="3">
    <location>
        <begin position="525"/>
        <end position="544"/>
    </location>
</feature>
<feature type="compositionally biased region" description="Basic residues" evidence="3">
    <location>
        <begin position="545"/>
        <end position="560"/>
    </location>
</feature>
<feature type="compositionally biased region" description="Low complexity" evidence="3">
    <location>
        <begin position="579"/>
        <end position="648"/>
    </location>
</feature>
<feature type="splice variant" id="VSP_034270" description="In isoform 2." evidence="4">
    <original>I</original>
    <variation>M</variation>
    <location>
        <position position="112"/>
    </location>
</feature>
<feature type="splice variant" id="VSP_034271" description="In isoform 2." evidence="4">
    <location>
        <begin position="113"/>
        <end position="648"/>
    </location>
</feature>
<feature type="sequence conflict" description="In Ref. 1; BAA95106." evidence="5" ref="1">
    <original>Q</original>
    <variation>P</variation>
    <location>
        <position position="93"/>
    </location>
</feature>
<protein>
    <recommendedName>
        <fullName>Serine/arginine repetitive matrix protein 3</fullName>
    </recommendedName>
</protein>
<keyword id="KW-0025">Alternative splicing</keyword>
<keyword id="KW-1185">Reference proteome</keyword>
<name>SRRM3_MOUSE</name>
<gene>
    <name type="primary">Srrm3</name>
    <name type="ORF">MNCb-4760</name>
</gene>
<evidence type="ECO:0000250" key="1">
    <source>
        <dbReference type="UniProtKB" id="A6NNA2"/>
    </source>
</evidence>
<evidence type="ECO:0000255" key="2"/>
<evidence type="ECO:0000256" key="3">
    <source>
        <dbReference type="SAM" id="MobiDB-lite"/>
    </source>
</evidence>
<evidence type="ECO:0000303" key="4">
    <source ref="1"/>
</evidence>
<evidence type="ECO:0000305" key="5"/>